<gene>
    <name evidence="1" type="primary">atpF2</name>
    <name evidence="1" type="synonym">atpG</name>
</gene>
<comment type="function">
    <text evidence="1">F(1)F(0) ATP synthase produces ATP from ADP in the presence of a proton or sodium gradient. F-type ATPases consist of two structural domains, F(1) containing the extramembraneous catalytic core and F(0) containing the membrane proton channel, linked together by a central stalk and a peripheral stalk. During catalysis, ATP synthesis in the catalytic domain of F(1) is coupled via a rotary mechanism of the central stalk subunits to proton translocation.</text>
</comment>
<comment type="function">
    <text evidence="1">Component of the F(0) channel, it forms part of the peripheral stalk, linking F(1) to F(0). The b'-subunit is a diverged and duplicated form of b found in plants and photosynthetic bacteria.</text>
</comment>
<comment type="subunit">
    <text evidence="1">F-type ATPases have 2 components, F(1) - the catalytic core - and F(0) - the membrane proton channel. F(1) has five subunits: alpha(3), beta(3), gamma(1), delta(1), epsilon(1). F(0) has four main subunits: a(1), b(1), b'(1) and c(10-14). The alpha and beta chains form an alternating ring which encloses part of the gamma chain. F(1) is attached to F(0) by a central stalk formed by the gamma and epsilon chains, while a peripheral stalk is formed by the delta, b and b' chains.</text>
</comment>
<comment type="subcellular location">
    <subcellularLocation>
        <location evidence="1">Plastid</location>
        <location evidence="1">Chloroplast thylakoid membrane</location>
        <topology evidence="1">Single-pass membrane protein</topology>
    </subcellularLocation>
</comment>
<comment type="miscellaneous">
    <text>In plastids the F-type ATPase is also known as CF(1)CF(0).</text>
</comment>
<comment type="similarity">
    <text evidence="1">Belongs to the ATPase B chain family.</text>
</comment>
<dbReference type="EMBL" id="X99078">
    <property type="protein sequence ID" value="CAA67537.1"/>
    <property type="molecule type" value="Genomic_DNA"/>
</dbReference>
<dbReference type="SMR" id="Q40608"/>
<dbReference type="GO" id="GO:0009535">
    <property type="term" value="C:chloroplast thylakoid membrane"/>
    <property type="evidence" value="ECO:0007669"/>
    <property type="project" value="UniProtKB-SubCell"/>
</dbReference>
<dbReference type="GO" id="GO:0045259">
    <property type="term" value="C:proton-transporting ATP synthase complex"/>
    <property type="evidence" value="ECO:0007669"/>
    <property type="project" value="UniProtKB-KW"/>
</dbReference>
<dbReference type="GO" id="GO:0005524">
    <property type="term" value="F:ATP binding"/>
    <property type="evidence" value="ECO:0007669"/>
    <property type="project" value="UniProtKB-KW"/>
</dbReference>
<dbReference type="GO" id="GO:0046933">
    <property type="term" value="F:proton-transporting ATP synthase activity, rotational mechanism"/>
    <property type="evidence" value="ECO:0007669"/>
    <property type="project" value="UniProtKB-UniRule"/>
</dbReference>
<dbReference type="GO" id="GO:0046961">
    <property type="term" value="F:proton-transporting ATPase activity, rotational mechanism"/>
    <property type="evidence" value="ECO:0007669"/>
    <property type="project" value="TreeGrafter"/>
</dbReference>
<dbReference type="CDD" id="cd06503">
    <property type="entry name" value="ATP-synt_Fo_b"/>
    <property type="match status" value="1"/>
</dbReference>
<dbReference type="HAMAP" id="MF_01398">
    <property type="entry name" value="ATP_synth_b_bprime"/>
    <property type="match status" value="1"/>
</dbReference>
<dbReference type="HAMAP" id="MF_01399">
    <property type="entry name" value="ATP_synth_bprime"/>
    <property type="match status" value="1"/>
</dbReference>
<dbReference type="InterPro" id="IPR034679">
    <property type="entry name" value="ATP_synth_b"/>
</dbReference>
<dbReference type="InterPro" id="IPR002146">
    <property type="entry name" value="ATP_synth_b/b'su_bac/chlpt"/>
</dbReference>
<dbReference type="InterPro" id="IPR050059">
    <property type="entry name" value="ATP_synthase_B_chain"/>
</dbReference>
<dbReference type="NCBIfam" id="NF005607">
    <property type="entry name" value="PRK07353.1"/>
    <property type="match status" value="1"/>
</dbReference>
<dbReference type="PANTHER" id="PTHR33445">
    <property type="entry name" value="ATP SYNTHASE SUBUNIT B', CHLOROPLASTIC"/>
    <property type="match status" value="1"/>
</dbReference>
<dbReference type="PANTHER" id="PTHR33445:SF2">
    <property type="entry name" value="ATP SYNTHASE SUBUNIT B', CHLOROPLASTIC"/>
    <property type="match status" value="1"/>
</dbReference>
<dbReference type="Pfam" id="PF00430">
    <property type="entry name" value="ATP-synt_B"/>
    <property type="match status" value="1"/>
</dbReference>
<geneLocation type="chloroplast"/>
<accession>Q40608</accession>
<feature type="chain" id="PRO_0000082436" description="ATP synthase subunit b', chloroplastic">
    <location>
        <begin position="1"/>
        <end position="163"/>
    </location>
</feature>
<feature type="transmembrane region" description="Helical" evidence="1">
    <location>
        <begin position="26"/>
        <end position="46"/>
    </location>
</feature>
<sequence length="163" mass="17987">MNLFSMPLGQMLALSEGEGGLFDFNATLPLMALQFILLTVILTFVFYKPIGNLLEEREAYINGNLSDASAKLLQADELCKQYEEQLKDAKADAQSCIADAETEAKQVVALELAQARKDAASLVEQVNKELEAQKELALKQLEAQIDELSQLIKEKLLGKQAIL</sequence>
<keyword id="KW-0066">ATP synthesis</keyword>
<keyword id="KW-0067">ATP-binding</keyword>
<keyword id="KW-0138">CF(0)</keyword>
<keyword id="KW-0150">Chloroplast</keyword>
<keyword id="KW-0375">Hydrogen ion transport</keyword>
<keyword id="KW-0406">Ion transport</keyword>
<keyword id="KW-0472">Membrane</keyword>
<keyword id="KW-0547">Nucleotide-binding</keyword>
<keyword id="KW-0934">Plastid</keyword>
<keyword id="KW-0793">Thylakoid</keyword>
<keyword id="KW-0812">Transmembrane</keyword>
<keyword id="KW-1133">Transmembrane helix</keyword>
<keyword id="KW-0813">Transport</keyword>
<proteinExistence type="inferred from homology"/>
<evidence type="ECO:0000255" key="1">
    <source>
        <dbReference type="HAMAP-Rule" id="MF_01399"/>
    </source>
</evidence>
<name>ATPF2_OCHNE</name>
<organism>
    <name type="scientific">Ochrosphaera neapolitana</name>
    <dbReference type="NCBI Taxonomy" id="35137"/>
    <lineage>
        <taxon>Eukaryota</taxon>
        <taxon>Haptista</taxon>
        <taxon>Haptophyta</taxon>
        <taxon>Prymnesiophyceae</taxon>
        <taxon>Coccolithales</taxon>
        <taxon>Hymenomonadaceae</taxon>
        <taxon>Ochrosphaera</taxon>
    </lineage>
</organism>
<reference key="1">
    <citation type="submission" date="1996-07" db="EMBL/GenBank/DDBJ databases">
        <authorList>
            <person name="Huss V.A.R."/>
            <person name="Tietze A.C."/>
            <person name="Julius C."/>
        </authorList>
    </citation>
    <scope>NUCLEOTIDE SEQUENCE [GENOMIC DNA]</scope>
    <source>
        <strain>CCMP593 / OCHRO / Plymouth163</strain>
    </source>
</reference>
<protein>
    <recommendedName>
        <fullName evidence="1">ATP synthase subunit b', chloroplastic</fullName>
    </recommendedName>
    <alternativeName>
        <fullName evidence="1">ATP synthase F(0) sector subunit b'</fullName>
    </alternativeName>
    <alternativeName>
        <fullName evidence="1">ATPase subunit II</fullName>
    </alternativeName>
</protein>